<reference key="1">
    <citation type="journal article" date="2009" name="J. Proteomics">
        <title>Combined snake venomics and venom gland transcriptomic analysis of the ocellated carpet viper, Echis ocellatus.</title>
        <authorList>
            <person name="Wagstaff S.C."/>
            <person name="Sanz L."/>
            <person name="Juarez P."/>
            <person name="Harrison R.A."/>
            <person name="Calvete J.J."/>
        </authorList>
    </citation>
    <scope>NUCLEOTIDE SEQUENCE [MRNA]</scope>
    <source>
        <tissue>Venom gland</tissue>
    </source>
</reference>
<reference key="2">
    <citation type="journal article" date="2011" name="Mol. Biol. Evol.">
        <title>Gene tree parsimony of multilocus snake venom protein families reveals species tree conflict as a result of multiple parallel gene loss.</title>
        <authorList>
            <person name="Casewell N.R."/>
            <person name="Wagstaff S.C."/>
            <person name="Harrison R.A."/>
            <person name="Wuster W."/>
        </authorList>
    </citation>
    <scope>NUCLEOTIDE SEQUENCE [MRNA]</scope>
    <source>
        <tissue>Venom gland</tissue>
    </source>
</reference>
<dbReference type="EC" id="3.4.21.-"/>
<dbReference type="EMBL" id="GU012100">
    <property type="protein sequence ID" value="ADI47554.1"/>
    <property type="molecule type" value="mRNA"/>
</dbReference>
<dbReference type="EMBL" id="FM177945">
    <property type="protein sequence ID" value="CAQ72889.1"/>
    <property type="molecule type" value="mRNA"/>
</dbReference>
<dbReference type="SMR" id="B5U6Y3"/>
<dbReference type="MEROPS" id="S01.334"/>
<dbReference type="GO" id="GO:0005576">
    <property type="term" value="C:extracellular region"/>
    <property type="evidence" value="ECO:0007669"/>
    <property type="project" value="UniProtKB-SubCell"/>
</dbReference>
<dbReference type="GO" id="GO:0030141">
    <property type="term" value="C:secretory granule"/>
    <property type="evidence" value="ECO:0007669"/>
    <property type="project" value="TreeGrafter"/>
</dbReference>
<dbReference type="GO" id="GO:0004252">
    <property type="term" value="F:serine-type endopeptidase activity"/>
    <property type="evidence" value="ECO:0007669"/>
    <property type="project" value="InterPro"/>
</dbReference>
<dbReference type="GO" id="GO:0090729">
    <property type="term" value="F:toxin activity"/>
    <property type="evidence" value="ECO:0007669"/>
    <property type="project" value="UniProtKB-KW"/>
</dbReference>
<dbReference type="GO" id="GO:0006508">
    <property type="term" value="P:proteolysis"/>
    <property type="evidence" value="ECO:0007669"/>
    <property type="project" value="UniProtKB-KW"/>
</dbReference>
<dbReference type="CDD" id="cd00190">
    <property type="entry name" value="Tryp_SPc"/>
    <property type="match status" value="1"/>
</dbReference>
<dbReference type="FunFam" id="2.40.10.10:FF:000005">
    <property type="entry name" value="Serine protease 37"/>
    <property type="match status" value="1"/>
</dbReference>
<dbReference type="FunFam" id="2.40.10.10:FF:000158">
    <property type="entry name" value="Thrombin-like enzyme saxthrombin"/>
    <property type="match status" value="1"/>
</dbReference>
<dbReference type="Gene3D" id="2.40.10.10">
    <property type="entry name" value="Trypsin-like serine proteases"/>
    <property type="match status" value="2"/>
</dbReference>
<dbReference type="InterPro" id="IPR009003">
    <property type="entry name" value="Peptidase_S1_PA"/>
</dbReference>
<dbReference type="InterPro" id="IPR043504">
    <property type="entry name" value="Peptidase_S1_PA_chymotrypsin"/>
</dbReference>
<dbReference type="InterPro" id="IPR001314">
    <property type="entry name" value="Peptidase_S1A"/>
</dbReference>
<dbReference type="InterPro" id="IPR001254">
    <property type="entry name" value="Trypsin_dom"/>
</dbReference>
<dbReference type="InterPro" id="IPR018114">
    <property type="entry name" value="TRYPSIN_HIS"/>
</dbReference>
<dbReference type="InterPro" id="IPR033116">
    <property type="entry name" value="TRYPSIN_SER"/>
</dbReference>
<dbReference type="PANTHER" id="PTHR24271:SF47">
    <property type="entry name" value="KALLIKREIN-1"/>
    <property type="match status" value="1"/>
</dbReference>
<dbReference type="PANTHER" id="PTHR24271">
    <property type="entry name" value="KALLIKREIN-RELATED"/>
    <property type="match status" value="1"/>
</dbReference>
<dbReference type="Pfam" id="PF00089">
    <property type="entry name" value="Trypsin"/>
    <property type="match status" value="1"/>
</dbReference>
<dbReference type="PRINTS" id="PR00722">
    <property type="entry name" value="CHYMOTRYPSIN"/>
</dbReference>
<dbReference type="SMART" id="SM00020">
    <property type="entry name" value="Tryp_SPc"/>
    <property type="match status" value="1"/>
</dbReference>
<dbReference type="SUPFAM" id="SSF50494">
    <property type="entry name" value="Trypsin-like serine proteases"/>
    <property type="match status" value="1"/>
</dbReference>
<dbReference type="PROSITE" id="PS50240">
    <property type="entry name" value="TRYPSIN_DOM"/>
    <property type="match status" value="1"/>
</dbReference>
<dbReference type="PROSITE" id="PS00134">
    <property type="entry name" value="TRYPSIN_HIS"/>
    <property type="match status" value="1"/>
</dbReference>
<dbReference type="PROSITE" id="PS00135">
    <property type="entry name" value="TRYPSIN_SER"/>
    <property type="match status" value="1"/>
</dbReference>
<sequence length="258" mass="28255">MVLIRVLANLLVLQLSYAQMSSELVVGGGECNRNRHRSLALLYNSSGTLCGGTLIHEEWVLSAAHCDMENMKIYLGLHNLSLPNKDQQKREPRETHFCLPSRNYTLWDKDIMLIKLNRPVNNSPHIAPISLPSNPPRLRSVCHIMGWGAITSPNETYPDVPHCANINILRYSVCRAAFGRLPAQSRTLCAGILRGGIDTCLGDSGGPLICNGQIQGIVSWGAEVCAKPHAPGLYTKVSDYTDWIQSIIAGNTTATCPP</sequence>
<proteinExistence type="evidence at transcript level"/>
<feature type="signal peptide" evidence="2">
    <location>
        <begin position="1"/>
        <end position="18"/>
    </location>
</feature>
<feature type="chain" id="PRO_0000432585" description="Serine protease sp-Eoc49" evidence="2">
    <location>
        <begin position="19"/>
        <end position="258"/>
    </location>
</feature>
<feature type="domain" description="Peptidase S1" evidence="3">
    <location>
        <begin position="25"/>
        <end position="249"/>
    </location>
</feature>
<feature type="active site" description="Charge relay system" evidence="3">
    <location>
        <position position="65"/>
    </location>
</feature>
<feature type="active site" description="Charge relay system" evidence="3">
    <location>
        <position position="110"/>
    </location>
</feature>
<feature type="active site" description="Charge relay system" evidence="3">
    <location>
        <position position="204"/>
    </location>
</feature>
<feature type="glycosylation site" description="N-linked (GlcNAc...) asparagine" evidence="4">
    <location>
        <position position="44"/>
    </location>
</feature>
<feature type="glycosylation site" description="N-linked (GlcNAc...) asparagine" evidence="4">
    <location>
        <position position="79"/>
    </location>
</feature>
<feature type="glycosylation site" description="N-linked (GlcNAc...) asparagine" evidence="4">
    <location>
        <position position="103"/>
    </location>
</feature>
<feature type="glycosylation site" description="N-linked (GlcNAc...) asparagine" evidence="4">
    <location>
        <position position="154"/>
    </location>
</feature>
<feature type="glycosylation site" description="N-linked (GlcNAc...) asparagine" evidence="4">
    <location>
        <position position="251"/>
    </location>
</feature>
<feature type="disulfide bond" evidence="3">
    <location>
        <begin position="50"/>
        <end position="66"/>
    </location>
</feature>
<feature type="disulfide bond" evidence="3">
    <location>
        <begin position="142"/>
        <end position="210"/>
    </location>
</feature>
<feature type="disulfide bond" evidence="3">
    <location>
        <begin position="174"/>
        <end position="189"/>
    </location>
</feature>
<feature type="disulfide bond" evidence="3">
    <location>
        <begin position="200"/>
        <end position="225"/>
    </location>
</feature>
<evidence type="ECO:0000250" key="1"/>
<evidence type="ECO:0000255" key="2"/>
<evidence type="ECO:0000255" key="3">
    <source>
        <dbReference type="PROSITE-ProRule" id="PRU00274"/>
    </source>
</evidence>
<evidence type="ECO:0000255" key="4">
    <source>
        <dbReference type="PROSITE-ProRule" id="PRU00498"/>
    </source>
</evidence>
<evidence type="ECO:0000305" key="5"/>
<protein>
    <recommendedName>
        <fullName>Serine protease sp-Eoc49</fullName>
        <ecNumber>3.4.21.-</ecNumber>
    </recommendedName>
    <alternativeName>
        <fullName>Snake venom serine protease</fullName>
        <shortName>SVSP</shortName>
    </alternativeName>
</protein>
<accession>B5U6Y3</accession>
<name>VSP_ECHOC</name>
<keyword id="KW-1015">Disulfide bond</keyword>
<keyword id="KW-0325">Glycoprotein</keyword>
<keyword id="KW-1199">Hemostasis impairing toxin</keyword>
<keyword id="KW-0378">Hydrolase</keyword>
<keyword id="KW-0645">Protease</keyword>
<keyword id="KW-0964">Secreted</keyword>
<keyword id="KW-0720">Serine protease</keyword>
<keyword id="KW-0732">Signal</keyword>
<keyword id="KW-0800">Toxin</keyword>
<comment type="function">
    <text evidence="1">Snake venom serine protease that may act in the hemostasis system of the prey.</text>
</comment>
<comment type="subunit">
    <text evidence="1">Monomer.</text>
</comment>
<comment type="subcellular location">
    <subcellularLocation>
        <location evidence="1">Secreted</location>
    </subcellularLocation>
</comment>
<comment type="tissue specificity">
    <text evidence="5">Expressed by the venom gland.</text>
</comment>
<comment type="similarity">
    <text evidence="5">Belongs to the peptidase S1 family. Snake venom subfamily.</text>
</comment>
<organism>
    <name type="scientific">Echis ocellatus</name>
    <name type="common">Ocellated saw-scaled viper</name>
    <dbReference type="NCBI Taxonomy" id="99586"/>
    <lineage>
        <taxon>Eukaryota</taxon>
        <taxon>Metazoa</taxon>
        <taxon>Chordata</taxon>
        <taxon>Craniata</taxon>
        <taxon>Vertebrata</taxon>
        <taxon>Euteleostomi</taxon>
        <taxon>Lepidosauria</taxon>
        <taxon>Squamata</taxon>
        <taxon>Bifurcata</taxon>
        <taxon>Unidentata</taxon>
        <taxon>Episquamata</taxon>
        <taxon>Toxicofera</taxon>
        <taxon>Serpentes</taxon>
        <taxon>Colubroidea</taxon>
        <taxon>Viperidae</taxon>
        <taxon>Viperinae</taxon>
        <taxon>Echis</taxon>
    </lineage>
</organism>